<proteinExistence type="inferred from homology"/>
<comment type="function">
    <text evidence="1">Part of the ABC transporter complex PhnCDE involved in phosphonates import. Responsible for energy coupling to the transport system.</text>
</comment>
<comment type="catalytic activity">
    <reaction evidence="1">
        <text>phosphonate(out) + ATP + H2O = phosphonate(in) + ADP + phosphate + H(+)</text>
        <dbReference type="Rhea" id="RHEA:18065"/>
        <dbReference type="ChEBI" id="CHEBI:15377"/>
        <dbReference type="ChEBI" id="CHEBI:15378"/>
        <dbReference type="ChEBI" id="CHEBI:16215"/>
        <dbReference type="ChEBI" id="CHEBI:30616"/>
        <dbReference type="ChEBI" id="CHEBI:43474"/>
        <dbReference type="ChEBI" id="CHEBI:456216"/>
        <dbReference type="EC" id="7.3.2.2"/>
    </reaction>
</comment>
<comment type="subunit">
    <text evidence="1">The complex is composed of two ATP-binding proteins (PhnC), two transmembrane proteins (PhnE) and a solute-binding protein (PhnD).</text>
</comment>
<comment type="subcellular location">
    <subcellularLocation>
        <location evidence="1">Cell inner membrane</location>
        <topology evidence="1">Peripheral membrane protein</topology>
    </subcellularLocation>
</comment>
<comment type="similarity">
    <text evidence="1">Belongs to the ABC transporter superfamily. Phosphonates importer (TC 3.A.1.9.1) family.</text>
</comment>
<keyword id="KW-0067">ATP-binding</keyword>
<keyword id="KW-0997">Cell inner membrane</keyword>
<keyword id="KW-1003">Cell membrane</keyword>
<keyword id="KW-0472">Membrane</keyword>
<keyword id="KW-0547">Nucleotide-binding</keyword>
<keyword id="KW-0918">Phosphonate transport</keyword>
<keyword id="KW-1185">Reference proteome</keyword>
<keyword id="KW-1278">Translocase</keyword>
<keyword id="KW-0813">Transport</keyword>
<sequence>MLTIDKLTKRFGEKTAVDAATIRVEKPTMIGIIGRSGAGKSTLLRMLNCLSSASEGTITFEGEEITGLRGAARRNWQSRCAMIFQQFNLVPRMDVVSNVLHGTLNKRSTFATMFNLYPQSDIHRAIEILDRLGIAEQAAKRAEALSGGQQQRVAIARALMQNPKIILADEPIASLDPMNAQVVMQALRRIHEEDGRMVIANLHTLDTARRYCDRVIGMRDGRIVFDGTPAQLTTGVARDIYGAGAGFSEAATSTEIDALDKPDIPTAKAYA</sequence>
<feature type="chain" id="PRO_0000274749" description="Phosphonates import ATP-binding protein PhnC 2">
    <location>
        <begin position="1"/>
        <end position="271"/>
    </location>
</feature>
<feature type="domain" description="ABC transporter" evidence="1">
    <location>
        <begin position="2"/>
        <end position="245"/>
    </location>
</feature>
<feature type="binding site" evidence="1">
    <location>
        <begin position="34"/>
        <end position="41"/>
    </location>
    <ligand>
        <name>ATP</name>
        <dbReference type="ChEBI" id="CHEBI:30616"/>
    </ligand>
</feature>
<evidence type="ECO:0000255" key="1">
    <source>
        <dbReference type="HAMAP-Rule" id="MF_01713"/>
    </source>
</evidence>
<protein>
    <recommendedName>
        <fullName evidence="1">Phosphonates import ATP-binding protein PhnC 2</fullName>
        <ecNumber evidence="1">7.3.2.2</ecNumber>
    </recommendedName>
</protein>
<gene>
    <name evidence="1" type="primary">phnC2</name>
    <name type="ordered locus">RD1_2403</name>
</gene>
<reference key="1">
    <citation type="journal article" date="2007" name="J. Bacteriol.">
        <title>The complete genome sequence of Roseobacter denitrificans reveals a mixotrophic rather than photosynthetic metabolism.</title>
        <authorList>
            <person name="Swingley W.D."/>
            <person name="Sadekar S."/>
            <person name="Mastrian S.D."/>
            <person name="Matthies H.J."/>
            <person name="Hao J."/>
            <person name="Ramos H."/>
            <person name="Acharya C.R."/>
            <person name="Conrad A.L."/>
            <person name="Taylor H.L."/>
            <person name="Dejesa L.C."/>
            <person name="Shah M.K."/>
            <person name="O'Huallachain M.E."/>
            <person name="Lince M.T."/>
            <person name="Blankenship R.E."/>
            <person name="Beatty J.T."/>
            <person name="Touchman J.W."/>
        </authorList>
    </citation>
    <scope>NUCLEOTIDE SEQUENCE [LARGE SCALE GENOMIC DNA]</scope>
    <source>
        <strain>ATCC 33942 / OCh 114</strain>
    </source>
</reference>
<name>PHNC2_ROSDO</name>
<accession>Q166X0</accession>
<dbReference type="EC" id="7.3.2.2" evidence="1"/>
<dbReference type="EMBL" id="CP000362">
    <property type="protein sequence ID" value="ABG31973.1"/>
    <property type="molecule type" value="Genomic_DNA"/>
</dbReference>
<dbReference type="RefSeq" id="WP_011568590.1">
    <property type="nucleotide sequence ID" value="NC_008209.1"/>
</dbReference>
<dbReference type="SMR" id="Q166X0"/>
<dbReference type="STRING" id="375451.RD1_2403"/>
<dbReference type="KEGG" id="rde:RD1_2403"/>
<dbReference type="eggNOG" id="COG3638">
    <property type="taxonomic scope" value="Bacteria"/>
</dbReference>
<dbReference type="HOGENOM" id="CLU_000604_1_22_5"/>
<dbReference type="OrthoDB" id="9802264at2"/>
<dbReference type="Proteomes" id="UP000007029">
    <property type="component" value="Chromosome"/>
</dbReference>
<dbReference type="GO" id="GO:0005886">
    <property type="term" value="C:plasma membrane"/>
    <property type="evidence" value="ECO:0007669"/>
    <property type="project" value="UniProtKB-SubCell"/>
</dbReference>
<dbReference type="GO" id="GO:0015416">
    <property type="term" value="F:ABC-type phosphonate transporter activity"/>
    <property type="evidence" value="ECO:0007669"/>
    <property type="project" value="UniProtKB-EC"/>
</dbReference>
<dbReference type="GO" id="GO:0005524">
    <property type="term" value="F:ATP binding"/>
    <property type="evidence" value="ECO:0007669"/>
    <property type="project" value="UniProtKB-KW"/>
</dbReference>
<dbReference type="GO" id="GO:0016887">
    <property type="term" value="F:ATP hydrolysis activity"/>
    <property type="evidence" value="ECO:0007669"/>
    <property type="project" value="InterPro"/>
</dbReference>
<dbReference type="CDD" id="cd03256">
    <property type="entry name" value="ABC_PhnC_transporter"/>
    <property type="match status" value="1"/>
</dbReference>
<dbReference type="Gene3D" id="3.40.50.300">
    <property type="entry name" value="P-loop containing nucleotide triphosphate hydrolases"/>
    <property type="match status" value="1"/>
</dbReference>
<dbReference type="InterPro" id="IPR003593">
    <property type="entry name" value="AAA+_ATPase"/>
</dbReference>
<dbReference type="InterPro" id="IPR003439">
    <property type="entry name" value="ABC_transporter-like_ATP-bd"/>
</dbReference>
<dbReference type="InterPro" id="IPR017871">
    <property type="entry name" value="ABC_transporter-like_CS"/>
</dbReference>
<dbReference type="InterPro" id="IPR012693">
    <property type="entry name" value="ABC_transpr_PhnC"/>
</dbReference>
<dbReference type="InterPro" id="IPR050086">
    <property type="entry name" value="MetN_ABC_transporter-like"/>
</dbReference>
<dbReference type="InterPro" id="IPR027417">
    <property type="entry name" value="P-loop_NTPase"/>
</dbReference>
<dbReference type="NCBIfam" id="TIGR02315">
    <property type="entry name" value="ABC_phnC"/>
    <property type="match status" value="1"/>
</dbReference>
<dbReference type="PANTHER" id="PTHR43166">
    <property type="entry name" value="AMINO ACID IMPORT ATP-BINDING PROTEIN"/>
    <property type="match status" value="1"/>
</dbReference>
<dbReference type="PANTHER" id="PTHR43166:SF6">
    <property type="entry name" value="PHOSPHONATES IMPORT ATP-BINDING PROTEIN PHNC"/>
    <property type="match status" value="1"/>
</dbReference>
<dbReference type="Pfam" id="PF00005">
    <property type="entry name" value="ABC_tran"/>
    <property type="match status" value="1"/>
</dbReference>
<dbReference type="SMART" id="SM00382">
    <property type="entry name" value="AAA"/>
    <property type="match status" value="1"/>
</dbReference>
<dbReference type="SUPFAM" id="SSF52540">
    <property type="entry name" value="P-loop containing nucleoside triphosphate hydrolases"/>
    <property type="match status" value="1"/>
</dbReference>
<dbReference type="PROSITE" id="PS00211">
    <property type="entry name" value="ABC_TRANSPORTER_1"/>
    <property type="match status" value="1"/>
</dbReference>
<dbReference type="PROSITE" id="PS50893">
    <property type="entry name" value="ABC_TRANSPORTER_2"/>
    <property type="match status" value="1"/>
</dbReference>
<dbReference type="PROSITE" id="PS51249">
    <property type="entry name" value="PHNC"/>
    <property type="match status" value="1"/>
</dbReference>
<organism>
    <name type="scientific">Roseobacter denitrificans (strain ATCC 33942 / OCh 114)</name>
    <name type="common">Erythrobacter sp. (strain OCh 114)</name>
    <name type="synonym">Roseobacter denitrificans</name>
    <dbReference type="NCBI Taxonomy" id="375451"/>
    <lineage>
        <taxon>Bacteria</taxon>
        <taxon>Pseudomonadati</taxon>
        <taxon>Pseudomonadota</taxon>
        <taxon>Alphaproteobacteria</taxon>
        <taxon>Rhodobacterales</taxon>
        <taxon>Roseobacteraceae</taxon>
        <taxon>Roseobacter</taxon>
    </lineage>
</organism>